<reference key="1">
    <citation type="journal article" date="2004" name="Genome Res.">
        <title>The status, quality, and expansion of the NIH full-length cDNA project: the Mammalian Gene Collection (MGC).</title>
        <authorList>
            <consortium name="The MGC Project Team"/>
        </authorList>
    </citation>
    <scope>NUCLEOTIDE SEQUENCE [LARGE SCALE MRNA]</scope>
    <source>
        <tissue>Testis</tissue>
    </source>
</reference>
<reference key="2">
    <citation type="journal article" date="2014" name="Mol. Cell. Biochem.">
        <title>Lyar, a cell growth-regulating zinc finger protein, was identified to be associated with cytoplasmic ribosomes in male germ and cancer cells.</title>
        <authorList>
            <person name="Yonezawa K."/>
            <person name="Sugihara Y."/>
            <person name="Oshima K."/>
            <person name="Matsuda T."/>
            <person name="Nadano D."/>
        </authorList>
    </citation>
    <scope>TISSUE SPECIFICITY</scope>
</reference>
<keyword id="KW-0966">Cell projection</keyword>
<keyword id="KW-0175">Coiled coil</keyword>
<keyword id="KW-0963">Cytoplasm</keyword>
<keyword id="KW-0391">Immunity</keyword>
<keyword id="KW-0399">Innate immunity</keyword>
<keyword id="KW-1017">Isopeptide bond</keyword>
<keyword id="KW-0479">Metal-binding</keyword>
<keyword id="KW-0539">Nucleus</keyword>
<keyword id="KW-1185">Reference proteome</keyword>
<keyword id="KW-0677">Repeat</keyword>
<keyword id="KW-0832">Ubl conjugation</keyword>
<keyword id="KW-0862">Zinc</keyword>
<keyword id="KW-0863">Zinc-finger</keyword>
<proteinExistence type="evidence at protein level"/>
<dbReference type="EMBL" id="BC079008">
    <property type="protein sequence ID" value="AAH79008.1"/>
    <property type="molecule type" value="mRNA"/>
</dbReference>
<dbReference type="RefSeq" id="NP_001011911.1">
    <property type="nucleotide sequence ID" value="NM_001011911.1"/>
</dbReference>
<dbReference type="RefSeq" id="XP_006251149.1">
    <property type="nucleotide sequence ID" value="XM_006251087.3"/>
</dbReference>
<dbReference type="RefSeq" id="XP_063129011.1">
    <property type="nucleotide sequence ID" value="XM_063272941.1"/>
</dbReference>
<dbReference type="SMR" id="Q6AYK5"/>
<dbReference type="BioGRID" id="252995">
    <property type="interactions" value="1"/>
</dbReference>
<dbReference type="FunCoup" id="Q6AYK5">
    <property type="interactions" value="1554"/>
</dbReference>
<dbReference type="STRING" id="10116.ENSRNOP00000073585"/>
<dbReference type="PhosphoSitePlus" id="Q6AYK5"/>
<dbReference type="jPOST" id="Q6AYK5"/>
<dbReference type="PaxDb" id="10116-ENSRNOP00000007154"/>
<dbReference type="GeneID" id="289707"/>
<dbReference type="KEGG" id="rno:289707"/>
<dbReference type="AGR" id="RGD:1305352"/>
<dbReference type="CTD" id="55646"/>
<dbReference type="RGD" id="1305352">
    <property type="gene designation" value="Lyar"/>
</dbReference>
<dbReference type="VEuPathDB" id="HostDB:ENSRNOG00000005374"/>
<dbReference type="eggNOG" id="KOG2186">
    <property type="taxonomic scope" value="Eukaryota"/>
</dbReference>
<dbReference type="HOGENOM" id="CLU_057137_0_1_1"/>
<dbReference type="InParanoid" id="Q6AYK5"/>
<dbReference type="OrthoDB" id="85481at9989"/>
<dbReference type="PhylomeDB" id="Q6AYK5"/>
<dbReference type="TreeFam" id="TF314925"/>
<dbReference type="PRO" id="PR:Q6AYK5"/>
<dbReference type="Proteomes" id="UP000002494">
    <property type="component" value="Chromosome 14"/>
</dbReference>
<dbReference type="Bgee" id="ENSRNOG00000005374">
    <property type="expression patterns" value="Expressed in testis and 19 other cell types or tissues"/>
</dbReference>
<dbReference type="ExpressionAtlas" id="Q6AYK5">
    <property type="expression patterns" value="baseline and differential"/>
</dbReference>
<dbReference type="GO" id="GO:0005737">
    <property type="term" value="C:cytoplasm"/>
    <property type="evidence" value="ECO:0007669"/>
    <property type="project" value="UniProtKB-SubCell"/>
</dbReference>
<dbReference type="GO" id="GO:0005730">
    <property type="term" value="C:nucleolus"/>
    <property type="evidence" value="ECO:0000250"/>
    <property type="project" value="UniProtKB"/>
</dbReference>
<dbReference type="GO" id="GO:0005634">
    <property type="term" value="C:nucleus"/>
    <property type="evidence" value="ECO:0000250"/>
    <property type="project" value="UniProtKB"/>
</dbReference>
<dbReference type="GO" id="GO:0001750">
    <property type="term" value="C:photoreceptor outer segment"/>
    <property type="evidence" value="ECO:0000250"/>
    <property type="project" value="UniProtKB"/>
</dbReference>
<dbReference type="GO" id="GO:0003677">
    <property type="term" value="F:DNA binding"/>
    <property type="evidence" value="ECO:0000250"/>
    <property type="project" value="UniProtKB"/>
</dbReference>
<dbReference type="GO" id="GO:0140297">
    <property type="term" value="F:DNA-binding transcription factor binding"/>
    <property type="evidence" value="ECO:0000266"/>
    <property type="project" value="RGD"/>
</dbReference>
<dbReference type="GO" id="GO:0042802">
    <property type="term" value="F:identical protein binding"/>
    <property type="evidence" value="ECO:0000266"/>
    <property type="project" value="RGD"/>
</dbReference>
<dbReference type="GO" id="GO:0140416">
    <property type="term" value="F:transcription regulator inhibitor activity"/>
    <property type="evidence" value="ECO:0000266"/>
    <property type="project" value="RGD"/>
</dbReference>
<dbReference type="GO" id="GO:0008270">
    <property type="term" value="F:zinc ion binding"/>
    <property type="evidence" value="ECO:0007669"/>
    <property type="project" value="UniProtKB-KW"/>
</dbReference>
<dbReference type="GO" id="GO:0048821">
    <property type="term" value="P:erythrocyte development"/>
    <property type="evidence" value="ECO:0000250"/>
    <property type="project" value="UniProtKB"/>
</dbReference>
<dbReference type="GO" id="GO:0045087">
    <property type="term" value="P:innate immune response"/>
    <property type="evidence" value="ECO:0007669"/>
    <property type="project" value="UniProtKB-KW"/>
</dbReference>
<dbReference type="GO" id="GO:0045824">
    <property type="term" value="P:negative regulation of innate immune response"/>
    <property type="evidence" value="ECO:0000266"/>
    <property type="project" value="RGD"/>
</dbReference>
<dbReference type="GO" id="GO:0000122">
    <property type="term" value="P:negative regulation of transcription by RNA polymerase II"/>
    <property type="evidence" value="ECO:0000250"/>
    <property type="project" value="UniProtKB"/>
</dbReference>
<dbReference type="GO" id="GO:0050766">
    <property type="term" value="P:positive regulation of phagocytosis"/>
    <property type="evidence" value="ECO:0000250"/>
    <property type="project" value="UniProtKB"/>
</dbReference>
<dbReference type="GO" id="GO:0045943">
    <property type="term" value="P:positive regulation of transcription by RNA polymerase I"/>
    <property type="evidence" value="ECO:0000266"/>
    <property type="project" value="RGD"/>
</dbReference>
<dbReference type="GO" id="GO:0006364">
    <property type="term" value="P:rRNA processing"/>
    <property type="evidence" value="ECO:0000250"/>
    <property type="project" value="UniProtKB"/>
</dbReference>
<dbReference type="FunFam" id="1.10.10.2100:FF:000002">
    <property type="entry name" value="cell growth-regulating nucleolar protein-like"/>
    <property type="match status" value="1"/>
</dbReference>
<dbReference type="FunFam" id="3.30.1490.490:FF:000001">
    <property type="entry name" value="cell growth-regulating nucleolar protein-like"/>
    <property type="match status" value="1"/>
</dbReference>
<dbReference type="Gene3D" id="1.10.10.2100">
    <property type="match status" value="1"/>
</dbReference>
<dbReference type="Gene3D" id="3.30.1490.490">
    <property type="match status" value="1"/>
</dbReference>
<dbReference type="InterPro" id="IPR039999">
    <property type="entry name" value="LYAR"/>
</dbReference>
<dbReference type="InterPro" id="IPR041010">
    <property type="entry name" value="Znf-ACC"/>
</dbReference>
<dbReference type="InterPro" id="IPR014898">
    <property type="entry name" value="Znf_C2H2_LYAR"/>
</dbReference>
<dbReference type="InterPro" id="IPR036236">
    <property type="entry name" value="Znf_C2H2_sf"/>
</dbReference>
<dbReference type="PANTHER" id="PTHR13100:SF10">
    <property type="entry name" value="CELL GROWTH-REGULATING NUCLEOLAR PROTEIN"/>
    <property type="match status" value="1"/>
</dbReference>
<dbReference type="PANTHER" id="PTHR13100">
    <property type="entry name" value="CELL GROWTH-REGULATING NUCLEOLAR PROTEIN LYAR"/>
    <property type="match status" value="1"/>
</dbReference>
<dbReference type="Pfam" id="PF08790">
    <property type="entry name" value="zf-LYAR"/>
    <property type="match status" value="1"/>
</dbReference>
<dbReference type="Pfam" id="PF17848">
    <property type="entry name" value="Zn_ribbon_ACC"/>
    <property type="match status" value="1"/>
</dbReference>
<dbReference type="SUPFAM" id="SSF57667">
    <property type="entry name" value="beta-beta-alpha zinc fingers"/>
    <property type="match status" value="2"/>
</dbReference>
<dbReference type="PROSITE" id="PS00059">
    <property type="entry name" value="ADH_ZINC"/>
    <property type="match status" value="1"/>
</dbReference>
<dbReference type="PROSITE" id="PS51804">
    <property type="entry name" value="ZF_C2HC_LYAR"/>
    <property type="match status" value="2"/>
</dbReference>
<protein>
    <recommendedName>
        <fullName>Cell growth-regulating nucleolar protein</fullName>
    </recommendedName>
</protein>
<evidence type="ECO:0000250" key="1">
    <source>
        <dbReference type="UniProtKB" id="Q08288"/>
    </source>
</evidence>
<evidence type="ECO:0000250" key="2">
    <source>
        <dbReference type="UniProtKB" id="Q9NX58"/>
    </source>
</evidence>
<evidence type="ECO:0000255" key="3"/>
<evidence type="ECO:0000255" key="4">
    <source>
        <dbReference type="PROSITE-ProRule" id="PRU01145"/>
    </source>
</evidence>
<evidence type="ECO:0000256" key="5">
    <source>
        <dbReference type="SAM" id="MobiDB-lite"/>
    </source>
</evidence>
<evidence type="ECO:0000269" key="6">
    <source>
    </source>
</evidence>
<organism>
    <name type="scientific">Rattus norvegicus</name>
    <name type="common">Rat</name>
    <dbReference type="NCBI Taxonomy" id="10116"/>
    <lineage>
        <taxon>Eukaryota</taxon>
        <taxon>Metazoa</taxon>
        <taxon>Chordata</taxon>
        <taxon>Craniata</taxon>
        <taxon>Vertebrata</taxon>
        <taxon>Euteleostomi</taxon>
        <taxon>Mammalia</taxon>
        <taxon>Eutheria</taxon>
        <taxon>Euarchontoglires</taxon>
        <taxon>Glires</taxon>
        <taxon>Rodentia</taxon>
        <taxon>Myomorpha</taxon>
        <taxon>Muroidea</taxon>
        <taxon>Muridae</taxon>
        <taxon>Murinae</taxon>
        <taxon>Rattus</taxon>
    </lineage>
</organism>
<feature type="chain" id="PRO_0000084530" description="Cell growth-regulating nucleolar protein">
    <location>
        <begin position="1"/>
        <end position="386"/>
    </location>
</feature>
<feature type="zinc finger region" description="C2HC LYAR-type 1" evidence="4">
    <location>
        <begin position="1"/>
        <end position="26"/>
    </location>
</feature>
<feature type="zinc finger region" description="C2HC LYAR-type 2" evidence="4">
    <location>
        <begin position="28"/>
        <end position="52"/>
    </location>
</feature>
<feature type="region of interest" description="Disordered" evidence="5">
    <location>
        <begin position="141"/>
        <end position="316"/>
    </location>
</feature>
<feature type="coiled-coil region" evidence="3">
    <location>
        <begin position="172"/>
        <end position="214"/>
    </location>
</feature>
<feature type="compositionally biased region" description="Polar residues" evidence="5">
    <location>
        <begin position="141"/>
        <end position="150"/>
    </location>
</feature>
<feature type="compositionally biased region" description="Polar residues" evidence="5">
    <location>
        <begin position="164"/>
        <end position="174"/>
    </location>
</feature>
<feature type="compositionally biased region" description="Basic and acidic residues" evidence="5">
    <location>
        <begin position="177"/>
        <end position="191"/>
    </location>
</feature>
<feature type="compositionally biased region" description="Basic and acidic residues" evidence="5">
    <location>
        <begin position="198"/>
        <end position="211"/>
    </location>
</feature>
<feature type="compositionally biased region" description="Basic and acidic residues" evidence="5">
    <location>
        <begin position="240"/>
        <end position="249"/>
    </location>
</feature>
<feature type="binding site" evidence="4">
    <location>
        <position position="6"/>
    </location>
    <ligand>
        <name>Zn(2+)</name>
        <dbReference type="ChEBI" id="CHEBI:29105"/>
        <label>1</label>
    </ligand>
</feature>
<feature type="binding site" evidence="4">
    <location>
        <position position="9"/>
    </location>
    <ligand>
        <name>Zn(2+)</name>
        <dbReference type="ChEBI" id="CHEBI:29105"/>
        <label>1</label>
    </ligand>
</feature>
<feature type="binding site" evidence="4">
    <location>
        <position position="21"/>
    </location>
    <ligand>
        <name>Zn(2+)</name>
        <dbReference type="ChEBI" id="CHEBI:29105"/>
        <label>1</label>
    </ligand>
</feature>
<feature type="binding site" evidence="4">
    <location>
        <position position="25"/>
    </location>
    <ligand>
        <name>Zn(2+)</name>
        <dbReference type="ChEBI" id="CHEBI:29105"/>
        <label>1</label>
    </ligand>
</feature>
<feature type="binding site" evidence="4">
    <location>
        <position position="33"/>
    </location>
    <ligand>
        <name>Zn(2+)</name>
        <dbReference type="ChEBI" id="CHEBI:29105"/>
        <label>2</label>
    </ligand>
</feature>
<feature type="binding site" evidence="4">
    <location>
        <position position="36"/>
    </location>
    <ligand>
        <name>Zn(2+)</name>
        <dbReference type="ChEBI" id="CHEBI:29105"/>
        <label>2</label>
    </ligand>
</feature>
<feature type="binding site" evidence="4">
    <location>
        <position position="48"/>
    </location>
    <ligand>
        <name>Zn(2+)</name>
        <dbReference type="ChEBI" id="CHEBI:29105"/>
        <label>2</label>
    </ligand>
</feature>
<feature type="binding site" evidence="4">
    <location>
        <position position="51"/>
    </location>
    <ligand>
        <name>Zn(2+)</name>
        <dbReference type="ChEBI" id="CHEBI:29105"/>
        <label>2</label>
    </ligand>
</feature>
<feature type="cross-link" description="Glycyl lysine isopeptide (Lys-Gly) (interchain with G-Cter in SUMO2)" evidence="2">
    <location>
        <position position="14"/>
    </location>
</feature>
<feature type="cross-link" description="Glycyl lysine isopeptide (Lys-Gly) (interchain with G-Cter in SUMO2)" evidence="2">
    <location>
        <position position="202"/>
    </location>
</feature>
<accession>Q6AYK5</accession>
<name>LYAR_RAT</name>
<sequence length="386" mass="43680">MVFFTCNACGESVKKIQVEKHVSICRNCECLSCIDCGKDFWGDDYKNHVKCISEDQKYGGKGYEAKTHKGDVKQQAWIQKINELIKKPNVSPKVRELLQQISAFDNVPRKKAKFQNWMRNSLKVHSDSVLEQVWNIFSEAASSEQDQQPPSHMAKPNTEVPTKVPSTKTNGTTEEQTEAKKNKRERKEERQKSRKKEKKELKLENHQENLKGQKPKKRKKGQEAGHEAGGEDAAEANGAPEKKRARDAQASEEGADRNGGPAEDADEGPTKTAAGKRKRQKHSEVESDNKKKKMKLPGQPEEGEPEDHEAPSKGKFNWKGTIKAVLKQAPDNEISVKKLKKKVIAQYHAVMSDHHTSEEELLAIFNKKISRNPTFKVLKDKVKLLK</sequence>
<comment type="function">
    <text evidence="1 2">Plays a role in the maintenance of the appropriate processing of 47S/45S pre-rRNA to 32S/30S pre-rRNAs and their subsequent processing to produce 18S and 28S rRNAs. Also acts at the level of transcription regulation. Along with PRMT5, binds embryonic globin promoter (By similarity). Represses the expression of embryonic globin Hbb-y gene (By similarity). In neuroblastoma cells, may also repress the expression of oxidative stress genes, including CHAC1, HMOX1, SLC7A11, ULBP1 and that encoding the small nucleolar RNA SNORD41. Preferentially binds to a DNA motif containing 5'-GGTTAT-3' (By similarity). Negatively regulates the antiviral innate immune response by targeting IRF3 and impairing its DNA-binding activity (By similarity). In addition, inhibits NF-kappa-B-mediated expression of pro-inflammatory cytokines (By similarity). Stimulates phagocytosis of photoreceptor outer segments by retinal pigment epithelial cells. Prevents NCL self-cleavage, maintaining a normal steady-state level of NCL protein in undifferentiated embryonic stem cells (ESCs), which in turn is essential for ESC self-renewal (By similarity).</text>
</comment>
<comment type="subunit">
    <text evidence="1 2">Interacts with PRMT5; this interaction is direct. Interacts with GNL2 and RPL23A (By similarity). Interacts with nucleolin/NCL; this interaction is direct (By similarity). Interacts with phosphorylated IRF3; this interaction impairs IRF3 DNA-binding activity (By similarity).</text>
</comment>
<comment type="subcellular location">
    <subcellularLocation>
        <location evidence="1">Nucleus</location>
        <location evidence="1">Nucleolus</location>
    </subcellularLocation>
    <subcellularLocation>
        <location evidence="6">Cytoplasm</location>
    </subcellularLocation>
    <subcellularLocation>
        <location evidence="1">Cell projection</location>
        <location evidence="1">Cilium</location>
        <location evidence="1">Photoreceptor outer segment</location>
    </subcellularLocation>
    <text evidence="1 2 6">Component of pre-ribosomal particles, including pre-40S, pre-60S and pre-90S (By similarity). Associated with cytoplasmic ribosomes, but not polysomes, as a component of the 60S subunit (PubMed:24990247). In the retina, predominantly expressed in photoreceptor outer segments. In the nucleolus, colocalizes with nucleolin/NCL, therefore may reside in the dense fibrillar component (DFC) (By similarity).</text>
</comment>
<comment type="tissue specificity">
    <text evidence="6">Expressed in testis (at protein level).</text>
</comment>
<comment type="domain">
    <text evidence="2">The N-terminal zinc-finger domains are required for the appropriate production of 28S rRNA and the formation of pre-60S particles.</text>
</comment>
<gene>
    <name type="primary">Lyar</name>
</gene>